<gene>
    <name evidence="1" type="primary">bchL</name>
    <name type="ordered locus">BBta_6414</name>
</gene>
<evidence type="ECO:0000255" key="1">
    <source>
        <dbReference type="HAMAP-Rule" id="MF_00355"/>
    </source>
</evidence>
<evidence type="ECO:0000256" key="2">
    <source>
        <dbReference type="SAM" id="MobiDB-lite"/>
    </source>
</evidence>
<sequence length="301" mass="32527">MNVTLRPPLTTAPRRPDGAGSVQVQLDPNVVIGTAKVFSVYGKGGIGKSTTSSNLSVALSKLGKRVLQIGCDPKHDSTFTLTKRLVPTVIDILEQVNFHAEELRPEDFVYQGYNGVMCVEAGGPPAGTGCGGYVVGQTVKLLKEHHLLEDTDVVIFDVLGDVVCGGFAAPLQHADRALIVAANDFDSIFAMNRIVAAIQAKSRNYPVRLGGVIANRSAATDQIDKFNERAGLKTVAHFPDLDVIRKSRLKKCTLFEMEPSPDVERAQNEYLRLAASLLAGVEPMQAVPLKDRDIFDLLGFD</sequence>
<feature type="chain" id="PRO_0000324052" description="Light-independent protochlorophyllide reductase iron-sulfur ATP-binding protein">
    <location>
        <begin position="1"/>
        <end position="301"/>
    </location>
</feature>
<feature type="region of interest" description="Disordered" evidence="2">
    <location>
        <begin position="1"/>
        <end position="21"/>
    </location>
</feature>
<feature type="compositionally biased region" description="Low complexity" evidence="2">
    <location>
        <begin position="1"/>
        <end position="13"/>
    </location>
</feature>
<feature type="binding site" evidence="1">
    <location>
        <begin position="45"/>
        <end position="50"/>
    </location>
    <ligand>
        <name>ATP</name>
        <dbReference type="ChEBI" id="CHEBI:30616"/>
    </ligand>
</feature>
<feature type="binding site" evidence="1">
    <location>
        <position position="49"/>
    </location>
    <ligand>
        <name>Mg(2+)</name>
        <dbReference type="ChEBI" id="CHEBI:18420"/>
    </ligand>
</feature>
<feature type="binding site" evidence="1">
    <location>
        <position position="74"/>
    </location>
    <ligand>
        <name>ATP</name>
        <dbReference type="ChEBI" id="CHEBI:30616"/>
    </ligand>
</feature>
<feature type="binding site" evidence="1">
    <location>
        <position position="130"/>
    </location>
    <ligand>
        <name>[4Fe-4S] cluster</name>
        <dbReference type="ChEBI" id="CHEBI:49883"/>
        <note>ligand shared between dimeric partners</note>
    </ligand>
</feature>
<feature type="binding site" evidence="1">
    <location>
        <position position="164"/>
    </location>
    <ligand>
        <name>[4Fe-4S] cluster</name>
        <dbReference type="ChEBI" id="CHEBI:49883"/>
        <note>ligand shared between dimeric partners</note>
    </ligand>
</feature>
<feature type="binding site" evidence="1">
    <location>
        <begin position="215"/>
        <end position="216"/>
    </location>
    <ligand>
        <name>ATP</name>
        <dbReference type="ChEBI" id="CHEBI:30616"/>
    </ligand>
</feature>
<feature type="binding site" evidence="1">
    <location>
        <begin position="239"/>
        <end position="241"/>
    </location>
    <ligand>
        <name>ATP</name>
        <dbReference type="ChEBI" id="CHEBI:30616"/>
    </ligand>
</feature>
<protein>
    <recommendedName>
        <fullName evidence="1">Light-independent protochlorophyllide reductase iron-sulfur ATP-binding protein</fullName>
        <shortName evidence="1">DPOR subunit L</shortName>
        <shortName evidence="1">LI-POR subunit L</shortName>
        <ecNumber evidence="1">1.3.7.7</ecNumber>
    </recommendedName>
</protein>
<accession>A5EQ80</accession>
<name>BCHL_BRASB</name>
<keyword id="KW-0004">4Fe-4S</keyword>
<keyword id="KW-0067">ATP-binding</keyword>
<keyword id="KW-0077">Bacteriochlorophyll biosynthesis</keyword>
<keyword id="KW-0149">Chlorophyll biosynthesis</keyword>
<keyword id="KW-0408">Iron</keyword>
<keyword id="KW-0411">Iron-sulfur</keyword>
<keyword id="KW-0460">Magnesium</keyword>
<keyword id="KW-0479">Metal-binding</keyword>
<keyword id="KW-0547">Nucleotide-binding</keyword>
<keyword id="KW-0560">Oxidoreductase</keyword>
<keyword id="KW-0602">Photosynthesis</keyword>
<keyword id="KW-1185">Reference proteome</keyword>
<comment type="function">
    <text evidence="1">Component of the dark-operative protochlorophyllide reductase (DPOR) that uses Mg-ATP and reduced ferredoxin to reduce ring D of protochlorophyllide (Pchlide) to form chlorophyllide a (Chlide). This reaction is light-independent. The L component serves as a unique electron donor to the NB-component of the complex, and binds Mg-ATP.</text>
</comment>
<comment type="catalytic activity">
    <reaction evidence="1">
        <text>chlorophyllide a + oxidized 2[4Fe-4S]-[ferredoxin] + 2 ADP + 2 phosphate = protochlorophyllide a + reduced 2[4Fe-4S]-[ferredoxin] + 2 ATP + 2 H2O</text>
        <dbReference type="Rhea" id="RHEA:28202"/>
        <dbReference type="Rhea" id="RHEA-COMP:10002"/>
        <dbReference type="Rhea" id="RHEA-COMP:10004"/>
        <dbReference type="ChEBI" id="CHEBI:15377"/>
        <dbReference type="ChEBI" id="CHEBI:30616"/>
        <dbReference type="ChEBI" id="CHEBI:33722"/>
        <dbReference type="ChEBI" id="CHEBI:33723"/>
        <dbReference type="ChEBI" id="CHEBI:43474"/>
        <dbReference type="ChEBI" id="CHEBI:83348"/>
        <dbReference type="ChEBI" id="CHEBI:83350"/>
        <dbReference type="ChEBI" id="CHEBI:456216"/>
        <dbReference type="EC" id="1.3.7.7"/>
    </reaction>
</comment>
<comment type="cofactor">
    <cofactor evidence="1">
        <name>[4Fe-4S] cluster</name>
        <dbReference type="ChEBI" id="CHEBI:49883"/>
    </cofactor>
    <text evidence="1">Binds 1 [4Fe-4S] cluster per dimer.</text>
</comment>
<comment type="pathway">
    <text evidence="1">Porphyrin-containing compound metabolism; bacteriochlorophyll biosynthesis (light-independent).</text>
</comment>
<comment type="subunit">
    <text evidence="1">Homodimer. Protochlorophyllide reductase is composed of three subunits; BchL, BchN and BchB.</text>
</comment>
<comment type="similarity">
    <text evidence="1">Belongs to the NifH/BchL/ChlL family.</text>
</comment>
<proteinExistence type="inferred from homology"/>
<reference key="1">
    <citation type="journal article" date="2007" name="Science">
        <title>Legumes symbioses: absence of nod genes in photosynthetic bradyrhizobia.</title>
        <authorList>
            <person name="Giraud E."/>
            <person name="Moulin L."/>
            <person name="Vallenet D."/>
            <person name="Barbe V."/>
            <person name="Cytryn E."/>
            <person name="Avarre J.-C."/>
            <person name="Jaubert M."/>
            <person name="Simon D."/>
            <person name="Cartieaux F."/>
            <person name="Prin Y."/>
            <person name="Bena G."/>
            <person name="Hannibal L."/>
            <person name="Fardoux J."/>
            <person name="Kojadinovic M."/>
            <person name="Vuillet L."/>
            <person name="Lajus A."/>
            <person name="Cruveiller S."/>
            <person name="Rouy Z."/>
            <person name="Mangenot S."/>
            <person name="Segurens B."/>
            <person name="Dossat C."/>
            <person name="Franck W.L."/>
            <person name="Chang W.-S."/>
            <person name="Saunders E."/>
            <person name="Bruce D."/>
            <person name="Richardson P."/>
            <person name="Normand P."/>
            <person name="Dreyfus B."/>
            <person name="Pignol D."/>
            <person name="Stacey G."/>
            <person name="Emerich D."/>
            <person name="Vermeglio A."/>
            <person name="Medigue C."/>
            <person name="Sadowsky M."/>
        </authorList>
    </citation>
    <scope>NUCLEOTIDE SEQUENCE [LARGE SCALE GENOMIC DNA]</scope>
    <source>
        <strain>BTAi1 / ATCC BAA-1182</strain>
    </source>
</reference>
<organism>
    <name type="scientific">Bradyrhizobium sp. (strain BTAi1 / ATCC BAA-1182)</name>
    <dbReference type="NCBI Taxonomy" id="288000"/>
    <lineage>
        <taxon>Bacteria</taxon>
        <taxon>Pseudomonadati</taxon>
        <taxon>Pseudomonadota</taxon>
        <taxon>Alphaproteobacteria</taxon>
        <taxon>Hyphomicrobiales</taxon>
        <taxon>Nitrobacteraceae</taxon>
        <taxon>Bradyrhizobium</taxon>
    </lineage>
</organism>
<dbReference type="EC" id="1.3.7.7" evidence="1"/>
<dbReference type="EMBL" id="CP000494">
    <property type="protein sequence ID" value="ABQ38324.1"/>
    <property type="molecule type" value="Genomic_DNA"/>
</dbReference>
<dbReference type="RefSeq" id="WP_012046265.1">
    <property type="nucleotide sequence ID" value="NC_009485.1"/>
</dbReference>
<dbReference type="SMR" id="A5EQ80"/>
<dbReference type="STRING" id="288000.BBta_6414"/>
<dbReference type="KEGG" id="bbt:BBta_6414"/>
<dbReference type="eggNOG" id="COG1348">
    <property type="taxonomic scope" value="Bacteria"/>
</dbReference>
<dbReference type="HOGENOM" id="CLU_059373_2_0_5"/>
<dbReference type="OrthoDB" id="9778641at2"/>
<dbReference type="UniPathway" id="UPA00671"/>
<dbReference type="Proteomes" id="UP000000246">
    <property type="component" value="Chromosome"/>
</dbReference>
<dbReference type="GO" id="GO:0051539">
    <property type="term" value="F:4 iron, 4 sulfur cluster binding"/>
    <property type="evidence" value="ECO:0007669"/>
    <property type="project" value="UniProtKB-UniRule"/>
</dbReference>
<dbReference type="GO" id="GO:0005524">
    <property type="term" value="F:ATP binding"/>
    <property type="evidence" value="ECO:0007669"/>
    <property type="project" value="UniProtKB-UniRule"/>
</dbReference>
<dbReference type="GO" id="GO:0046872">
    <property type="term" value="F:metal ion binding"/>
    <property type="evidence" value="ECO:0007669"/>
    <property type="project" value="UniProtKB-KW"/>
</dbReference>
<dbReference type="GO" id="GO:0016730">
    <property type="term" value="F:oxidoreductase activity, acting on iron-sulfur proteins as donors"/>
    <property type="evidence" value="ECO:0007669"/>
    <property type="project" value="InterPro"/>
</dbReference>
<dbReference type="GO" id="GO:0016636">
    <property type="term" value="F:oxidoreductase activity, acting on the CH-CH group of donors, iron-sulfur protein as acceptor"/>
    <property type="evidence" value="ECO:0007669"/>
    <property type="project" value="UniProtKB-UniRule"/>
</dbReference>
<dbReference type="GO" id="GO:0036070">
    <property type="term" value="P:light-independent bacteriochlorophyll biosynthetic process"/>
    <property type="evidence" value="ECO:0007669"/>
    <property type="project" value="UniProtKB-UniRule"/>
</dbReference>
<dbReference type="GO" id="GO:0019685">
    <property type="term" value="P:photosynthesis, dark reaction"/>
    <property type="evidence" value="ECO:0007669"/>
    <property type="project" value="InterPro"/>
</dbReference>
<dbReference type="CDD" id="cd02032">
    <property type="entry name" value="Bchl-like"/>
    <property type="match status" value="1"/>
</dbReference>
<dbReference type="Gene3D" id="3.40.50.300">
    <property type="entry name" value="P-loop containing nucleotide triphosphate hydrolases"/>
    <property type="match status" value="1"/>
</dbReference>
<dbReference type="HAMAP" id="MF_00355">
    <property type="entry name" value="ChlL_BchL"/>
    <property type="match status" value="1"/>
</dbReference>
<dbReference type="InterPro" id="IPR030655">
    <property type="entry name" value="NifH/chlL_CS"/>
</dbReference>
<dbReference type="InterPro" id="IPR000392">
    <property type="entry name" value="NifH/frxC"/>
</dbReference>
<dbReference type="InterPro" id="IPR027417">
    <property type="entry name" value="P-loop_NTPase"/>
</dbReference>
<dbReference type="InterPro" id="IPR005971">
    <property type="entry name" value="Protochlorophyllide_ATP-bd"/>
</dbReference>
<dbReference type="NCBIfam" id="TIGR01281">
    <property type="entry name" value="DPOR_bchL"/>
    <property type="match status" value="1"/>
</dbReference>
<dbReference type="PANTHER" id="PTHR42864">
    <property type="entry name" value="LIGHT-INDEPENDENT PROTOCHLOROPHYLLIDE REDUCTASE IRON-SULFUR ATP-BINDING PROTEIN"/>
    <property type="match status" value="1"/>
</dbReference>
<dbReference type="PANTHER" id="PTHR42864:SF2">
    <property type="entry name" value="LIGHT-INDEPENDENT PROTOCHLOROPHYLLIDE REDUCTASE IRON-SULFUR ATP-BINDING PROTEIN"/>
    <property type="match status" value="1"/>
</dbReference>
<dbReference type="Pfam" id="PF00142">
    <property type="entry name" value="Fer4_NifH"/>
    <property type="match status" value="1"/>
</dbReference>
<dbReference type="PIRSF" id="PIRSF000363">
    <property type="entry name" value="Nitrogenase_iron"/>
    <property type="match status" value="1"/>
</dbReference>
<dbReference type="PRINTS" id="PR00091">
    <property type="entry name" value="NITROGNASEII"/>
</dbReference>
<dbReference type="SUPFAM" id="SSF52540">
    <property type="entry name" value="P-loop containing nucleoside triphosphate hydrolases"/>
    <property type="match status" value="1"/>
</dbReference>
<dbReference type="PROSITE" id="PS00746">
    <property type="entry name" value="NIFH_FRXC_1"/>
    <property type="match status" value="1"/>
</dbReference>
<dbReference type="PROSITE" id="PS00692">
    <property type="entry name" value="NIFH_FRXC_2"/>
    <property type="match status" value="1"/>
</dbReference>
<dbReference type="PROSITE" id="PS51026">
    <property type="entry name" value="NIFH_FRXC_3"/>
    <property type="match status" value="1"/>
</dbReference>